<sequence length="116" mass="13610">MTRVKRGNVARKRRKKILKLAKGYRGSHSRLFRIANQQVMKALRNAYRDRRKRKRDFRRLWIARINAATRQHGVSYSKFMGQLKRADIQLNRKMLAQLAATDPDSFSKIVELAGKA</sequence>
<comment type="function">
    <text evidence="1">Binds directly to 23S ribosomal RNA and is necessary for the in vitro assembly process of the 50S ribosomal subunit. It is not involved in the protein synthesizing functions of that subunit.</text>
</comment>
<comment type="similarity">
    <text evidence="1">Belongs to the bacterial ribosomal protein bL20 family.</text>
</comment>
<accession>B0BZS8</accession>
<protein>
    <recommendedName>
        <fullName evidence="1">Large ribosomal subunit protein bL20</fullName>
    </recommendedName>
    <alternativeName>
        <fullName evidence="2">50S ribosomal protein L20</fullName>
    </alternativeName>
</protein>
<proteinExistence type="inferred from homology"/>
<name>RL20_ACAM1</name>
<feature type="chain" id="PRO_1000080055" description="Large ribosomal subunit protein bL20">
    <location>
        <begin position="1"/>
        <end position="116"/>
    </location>
</feature>
<organism>
    <name type="scientific">Acaryochloris marina (strain MBIC 11017)</name>
    <dbReference type="NCBI Taxonomy" id="329726"/>
    <lineage>
        <taxon>Bacteria</taxon>
        <taxon>Bacillati</taxon>
        <taxon>Cyanobacteriota</taxon>
        <taxon>Cyanophyceae</taxon>
        <taxon>Acaryochloridales</taxon>
        <taxon>Acaryochloridaceae</taxon>
        <taxon>Acaryochloris</taxon>
    </lineage>
</organism>
<gene>
    <name evidence="1" type="primary">rplT</name>
    <name evidence="1" type="synonym">rpl20</name>
    <name type="ordered locus">AM1_2124</name>
</gene>
<evidence type="ECO:0000255" key="1">
    <source>
        <dbReference type="HAMAP-Rule" id="MF_00382"/>
    </source>
</evidence>
<evidence type="ECO:0000305" key="2"/>
<reference key="1">
    <citation type="journal article" date="2008" name="Proc. Natl. Acad. Sci. U.S.A.">
        <title>Niche adaptation and genome expansion in the chlorophyll d-producing cyanobacterium Acaryochloris marina.</title>
        <authorList>
            <person name="Swingley W.D."/>
            <person name="Chen M."/>
            <person name="Cheung P.C."/>
            <person name="Conrad A.L."/>
            <person name="Dejesa L.C."/>
            <person name="Hao J."/>
            <person name="Honchak B.M."/>
            <person name="Karbach L.E."/>
            <person name="Kurdoglu A."/>
            <person name="Lahiri S."/>
            <person name="Mastrian S.D."/>
            <person name="Miyashita H."/>
            <person name="Page L."/>
            <person name="Ramakrishna P."/>
            <person name="Satoh S."/>
            <person name="Sattley W.M."/>
            <person name="Shimada Y."/>
            <person name="Taylor H.L."/>
            <person name="Tomo T."/>
            <person name="Tsuchiya T."/>
            <person name="Wang Z.T."/>
            <person name="Raymond J."/>
            <person name="Mimuro M."/>
            <person name="Blankenship R.E."/>
            <person name="Touchman J.W."/>
        </authorList>
    </citation>
    <scope>NUCLEOTIDE SEQUENCE [LARGE SCALE GENOMIC DNA]</scope>
    <source>
        <strain>MBIC 11017</strain>
    </source>
</reference>
<keyword id="KW-1185">Reference proteome</keyword>
<keyword id="KW-0687">Ribonucleoprotein</keyword>
<keyword id="KW-0689">Ribosomal protein</keyword>
<keyword id="KW-0694">RNA-binding</keyword>
<keyword id="KW-0699">rRNA-binding</keyword>
<dbReference type="EMBL" id="CP000828">
    <property type="protein sequence ID" value="ABW27138.1"/>
    <property type="molecule type" value="Genomic_DNA"/>
</dbReference>
<dbReference type="RefSeq" id="WP_010477428.1">
    <property type="nucleotide sequence ID" value="NC_009925.1"/>
</dbReference>
<dbReference type="SMR" id="B0BZS8"/>
<dbReference type="STRING" id="329726.AM1_2124"/>
<dbReference type="KEGG" id="amr:AM1_2124"/>
<dbReference type="eggNOG" id="COG0292">
    <property type="taxonomic scope" value="Bacteria"/>
</dbReference>
<dbReference type="HOGENOM" id="CLU_123265_0_1_3"/>
<dbReference type="OrthoDB" id="9808966at2"/>
<dbReference type="Proteomes" id="UP000000268">
    <property type="component" value="Chromosome"/>
</dbReference>
<dbReference type="GO" id="GO:1990904">
    <property type="term" value="C:ribonucleoprotein complex"/>
    <property type="evidence" value="ECO:0007669"/>
    <property type="project" value="UniProtKB-KW"/>
</dbReference>
<dbReference type="GO" id="GO:0005840">
    <property type="term" value="C:ribosome"/>
    <property type="evidence" value="ECO:0007669"/>
    <property type="project" value="UniProtKB-KW"/>
</dbReference>
<dbReference type="GO" id="GO:0019843">
    <property type="term" value="F:rRNA binding"/>
    <property type="evidence" value="ECO:0007669"/>
    <property type="project" value="UniProtKB-UniRule"/>
</dbReference>
<dbReference type="GO" id="GO:0003735">
    <property type="term" value="F:structural constituent of ribosome"/>
    <property type="evidence" value="ECO:0007669"/>
    <property type="project" value="InterPro"/>
</dbReference>
<dbReference type="GO" id="GO:0000027">
    <property type="term" value="P:ribosomal large subunit assembly"/>
    <property type="evidence" value="ECO:0007669"/>
    <property type="project" value="UniProtKB-UniRule"/>
</dbReference>
<dbReference type="GO" id="GO:0006412">
    <property type="term" value="P:translation"/>
    <property type="evidence" value="ECO:0007669"/>
    <property type="project" value="InterPro"/>
</dbReference>
<dbReference type="CDD" id="cd07026">
    <property type="entry name" value="Ribosomal_L20"/>
    <property type="match status" value="1"/>
</dbReference>
<dbReference type="FunFam" id="1.10.1900.20:FF:000001">
    <property type="entry name" value="50S ribosomal protein L20"/>
    <property type="match status" value="1"/>
</dbReference>
<dbReference type="Gene3D" id="6.10.160.10">
    <property type="match status" value="1"/>
</dbReference>
<dbReference type="Gene3D" id="1.10.1900.20">
    <property type="entry name" value="Ribosomal protein L20"/>
    <property type="match status" value="1"/>
</dbReference>
<dbReference type="HAMAP" id="MF_00382">
    <property type="entry name" value="Ribosomal_bL20"/>
    <property type="match status" value="1"/>
</dbReference>
<dbReference type="InterPro" id="IPR005813">
    <property type="entry name" value="Ribosomal_bL20"/>
</dbReference>
<dbReference type="InterPro" id="IPR049946">
    <property type="entry name" value="RIBOSOMAL_L20_CS"/>
</dbReference>
<dbReference type="InterPro" id="IPR035566">
    <property type="entry name" value="Ribosomal_protein_bL20_C"/>
</dbReference>
<dbReference type="NCBIfam" id="TIGR01032">
    <property type="entry name" value="rplT_bact"/>
    <property type="match status" value="1"/>
</dbReference>
<dbReference type="PANTHER" id="PTHR10986">
    <property type="entry name" value="39S RIBOSOMAL PROTEIN L20"/>
    <property type="match status" value="1"/>
</dbReference>
<dbReference type="Pfam" id="PF00453">
    <property type="entry name" value="Ribosomal_L20"/>
    <property type="match status" value="1"/>
</dbReference>
<dbReference type="PRINTS" id="PR00062">
    <property type="entry name" value="RIBOSOMALL20"/>
</dbReference>
<dbReference type="SUPFAM" id="SSF74731">
    <property type="entry name" value="Ribosomal protein L20"/>
    <property type="match status" value="1"/>
</dbReference>
<dbReference type="PROSITE" id="PS00937">
    <property type="entry name" value="RIBOSOMAL_L20"/>
    <property type="match status" value="1"/>
</dbReference>